<keyword id="KW-0067">ATP-binding</keyword>
<keyword id="KW-0143">Chaperone</keyword>
<keyword id="KW-0547">Nucleotide-binding</keyword>
<keyword id="KW-0597">Phosphoprotein</keyword>
<keyword id="KW-0346">Stress response</keyword>
<comment type="function">
    <text evidence="1">Acts as a chaperone.</text>
</comment>
<comment type="induction">
    <text evidence="1">By stress conditions e.g. heat shock.</text>
</comment>
<comment type="similarity">
    <text evidence="1">Belongs to the heat shock protein 70 family.</text>
</comment>
<dbReference type="EMBL" id="CP001127">
    <property type="protein sequence ID" value="ACF90594.1"/>
    <property type="molecule type" value="Genomic_DNA"/>
</dbReference>
<dbReference type="RefSeq" id="WP_000516126.1">
    <property type="nucleotide sequence ID" value="NC_011094.1"/>
</dbReference>
<dbReference type="SMR" id="B4TVZ5"/>
<dbReference type="GeneID" id="66754552"/>
<dbReference type="KEGG" id="sew:SeSA_A0013"/>
<dbReference type="HOGENOM" id="CLU_005965_2_1_6"/>
<dbReference type="Proteomes" id="UP000001865">
    <property type="component" value="Chromosome"/>
</dbReference>
<dbReference type="GO" id="GO:0005524">
    <property type="term" value="F:ATP binding"/>
    <property type="evidence" value="ECO:0007669"/>
    <property type="project" value="UniProtKB-UniRule"/>
</dbReference>
<dbReference type="GO" id="GO:0140662">
    <property type="term" value="F:ATP-dependent protein folding chaperone"/>
    <property type="evidence" value="ECO:0007669"/>
    <property type="project" value="InterPro"/>
</dbReference>
<dbReference type="GO" id="GO:0051082">
    <property type="term" value="F:unfolded protein binding"/>
    <property type="evidence" value="ECO:0007669"/>
    <property type="project" value="InterPro"/>
</dbReference>
<dbReference type="CDD" id="cd10234">
    <property type="entry name" value="ASKHA_NBD_HSP70_DnaK-like"/>
    <property type="match status" value="1"/>
</dbReference>
<dbReference type="FunFam" id="2.60.34.10:FF:000014">
    <property type="entry name" value="Chaperone protein DnaK HSP70"/>
    <property type="match status" value="1"/>
</dbReference>
<dbReference type="FunFam" id="1.20.1270.10:FF:000001">
    <property type="entry name" value="Molecular chaperone DnaK"/>
    <property type="match status" value="1"/>
</dbReference>
<dbReference type="FunFam" id="3.30.420.40:FF:000004">
    <property type="entry name" value="Molecular chaperone DnaK"/>
    <property type="match status" value="1"/>
</dbReference>
<dbReference type="FunFam" id="3.90.640.10:FF:000003">
    <property type="entry name" value="Molecular chaperone DnaK"/>
    <property type="match status" value="1"/>
</dbReference>
<dbReference type="Gene3D" id="1.20.1270.10">
    <property type="match status" value="1"/>
</dbReference>
<dbReference type="Gene3D" id="3.30.420.40">
    <property type="match status" value="2"/>
</dbReference>
<dbReference type="Gene3D" id="3.90.640.10">
    <property type="entry name" value="Actin, Chain A, domain 4"/>
    <property type="match status" value="1"/>
</dbReference>
<dbReference type="Gene3D" id="2.60.34.10">
    <property type="entry name" value="Substrate Binding Domain Of DNAk, Chain A, domain 1"/>
    <property type="match status" value="1"/>
</dbReference>
<dbReference type="HAMAP" id="MF_00332">
    <property type="entry name" value="DnaK"/>
    <property type="match status" value="1"/>
</dbReference>
<dbReference type="InterPro" id="IPR043129">
    <property type="entry name" value="ATPase_NBD"/>
</dbReference>
<dbReference type="InterPro" id="IPR012725">
    <property type="entry name" value="Chaperone_DnaK"/>
</dbReference>
<dbReference type="InterPro" id="IPR018181">
    <property type="entry name" value="Heat_shock_70_CS"/>
</dbReference>
<dbReference type="InterPro" id="IPR029048">
    <property type="entry name" value="HSP70_C_sf"/>
</dbReference>
<dbReference type="InterPro" id="IPR029047">
    <property type="entry name" value="HSP70_peptide-bd_sf"/>
</dbReference>
<dbReference type="InterPro" id="IPR013126">
    <property type="entry name" value="Hsp_70_fam"/>
</dbReference>
<dbReference type="NCBIfam" id="NF001413">
    <property type="entry name" value="PRK00290.1"/>
    <property type="match status" value="1"/>
</dbReference>
<dbReference type="NCBIfam" id="NF003520">
    <property type="entry name" value="PRK05183.1"/>
    <property type="match status" value="1"/>
</dbReference>
<dbReference type="NCBIfam" id="TIGR02350">
    <property type="entry name" value="prok_dnaK"/>
    <property type="match status" value="1"/>
</dbReference>
<dbReference type="PANTHER" id="PTHR19375">
    <property type="entry name" value="HEAT SHOCK PROTEIN 70KDA"/>
    <property type="match status" value="1"/>
</dbReference>
<dbReference type="Pfam" id="PF00012">
    <property type="entry name" value="HSP70"/>
    <property type="match status" value="1"/>
</dbReference>
<dbReference type="PRINTS" id="PR00301">
    <property type="entry name" value="HEATSHOCK70"/>
</dbReference>
<dbReference type="SUPFAM" id="SSF53067">
    <property type="entry name" value="Actin-like ATPase domain"/>
    <property type="match status" value="2"/>
</dbReference>
<dbReference type="SUPFAM" id="SSF100934">
    <property type="entry name" value="Heat shock protein 70kD (HSP70), C-terminal subdomain"/>
    <property type="match status" value="1"/>
</dbReference>
<dbReference type="SUPFAM" id="SSF100920">
    <property type="entry name" value="Heat shock protein 70kD (HSP70), peptide-binding domain"/>
    <property type="match status" value="1"/>
</dbReference>
<dbReference type="PROSITE" id="PS00297">
    <property type="entry name" value="HSP70_1"/>
    <property type="match status" value="1"/>
</dbReference>
<dbReference type="PROSITE" id="PS00329">
    <property type="entry name" value="HSP70_2"/>
    <property type="match status" value="1"/>
</dbReference>
<dbReference type="PROSITE" id="PS01036">
    <property type="entry name" value="HSP70_3"/>
    <property type="match status" value="1"/>
</dbReference>
<sequence length="638" mass="69231">MGKIIGIDLGTTNSCVAIMDGTQARVLENAEGDRTTPSIIAYTQDGETLVGQPAKRQAVTNPQNTLFAIKRLIGRRFQDEEVQRDVSIMPYKIIGADNGDAWLDVKGQKMAPPQISAEVLKKMKKTAEDYLGEPVTEAVITVPAYFNDAQRQATKDAGRIAGLEVKRIINEPTAAALAYGLDKEVGNRTIAVYDLGGGTFDISIIEIDEVDGEKTFEVLATNGDTHLGGEDFDTRLINYLVDEFKKDQGIDLRNDPLAMQRLKEAAEKAKIELSSAQQTDVNLPYITADATGPKHMNIKVTRAKLESLVEDLVNRSIEPLKVALQDAGLSVSDINDVILVGGQTRMPMVQKKVAEFFGKEPRKDVNPDEAVAIGAAVQGGVLTGDVKDVLLLDVTPLSLGIETMGGVMTPLITKNTTIPTKHSQVFSTAEDNQSAVTIHVLQGERKRASDNKSLGQFNLDGINPAPRGMPQIEVTFDIDADGILHVSAKDKNSGKEQKITIKASSGLNEEEIQKMVRDAEANAESDRKFEELVQTRNQGDHLLHSTRKQVEEAGDKLPADDKTAIESALSALETALKGEDKAAIEAKMQELAQVSQKLMEIAQQQHAQQQAGSADASANNAKDDDVVDAEFEEVKDKK</sequence>
<name>DNAK_SALSV</name>
<protein>
    <recommendedName>
        <fullName evidence="1">Chaperone protein DnaK</fullName>
    </recommendedName>
    <alternativeName>
        <fullName evidence="1">HSP70</fullName>
    </alternativeName>
    <alternativeName>
        <fullName evidence="1">Heat shock 70 kDa protein</fullName>
    </alternativeName>
    <alternativeName>
        <fullName evidence="1">Heat shock protein 70</fullName>
    </alternativeName>
</protein>
<reference key="1">
    <citation type="journal article" date="2011" name="J. Bacteriol.">
        <title>Comparative genomics of 28 Salmonella enterica isolates: evidence for CRISPR-mediated adaptive sublineage evolution.</title>
        <authorList>
            <person name="Fricke W.F."/>
            <person name="Mammel M.K."/>
            <person name="McDermott P.F."/>
            <person name="Tartera C."/>
            <person name="White D.G."/>
            <person name="Leclerc J.E."/>
            <person name="Ravel J."/>
            <person name="Cebula T.A."/>
        </authorList>
    </citation>
    <scope>NUCLEOTIDE SEQUENCE [LARGE SCALE GENOMIC DNA]</scope>
    <source>
        <strain>CVM19633</strain>
    </source>
</reference>
<feature type="chain" id="PRO_1000119756" description="Chaperone protein DnaK">
    <location>
        <begin position="1"/>
        <end position="638"/>
    </location>
</feature>
<feature type="region of interest" description="Disordered" evidence="2">
    <location>
        <begin position="603"/>
        <end position="638"/>
    </location>
</feature>
<feature type="compositionally biased region" description="Low complexity" evidence="2">
    <location>
        <begin position="603"/>
        <end position="620"/>
    </location>
</feature>
<feature type="modified residue" description="Phosphothreonine; by autocatalysis" evidence="1">
    <location>
        <position position="199"/>
    </location>
</feature>
<organism>
    <name type="scientific">Salmonella schwarzengrund (strain CVM19633)</name>
    <dbReference type="NCBI Taxonomy" id="439843"/>
    <lineage>
        <taxon>Bacteria</taxon>
        <taxon>Pseudomonadati</taxon>
        <taxon>Pseudomonadota</taxon>
        <taxon>Gammaproteobacteria</taxon>
        <taxon>Enterobacterales</taxon>
        <taxon>Enterobacteriaceae</taxon>
        <taxon>Salmonella</taxon>
    </lineage>
</organism>
<evidence type="ECO:0000255" key="1">
    <source>
        <dbReference type="HAMAP-Rule" id="MF_00332"/>
    </source>
</evidence>
<evidence type="ECO:0000256" key="2">
    <source>
        <dbReference type="SAM" id="MobiDB-lite"/>
    </source>
</evidence>
<proteinExistence type="inferred from homology"/>
<gene>
    <name evidence="1" type="primary">dnaK</name>
    <name type="ordered locus">SeSA_A0013</name>
</gene>
<accession>B4TVZ5</accession>